<gene>
    <name evidence="1" type="primary">obg</name>
    <name type="ordered locus">Ssed_0956</name>
</gene>
<reference key="1">
    <citation type="submission" date="2007-08" db="EMBL/GenBank/DDBJ databases">
        <title>Complete sequence of Shewanella sediminis HAW-EB3.</title>
        <authorList>
            <consortium name="US DOE Joint Genome Institute"/>
            <person name="Copeland A."/>
            <person name="Lucas S."/>
            <person name="Lapidus A."/>
            <person name="Barry K."/>
            <person name="Glavina del Rio T."/>
            <person name="Dalin E."/>
            <person name="Tice H."/>
            <person name="Pitluck S."/>
            <person name="Chertkov O."/>
            <person name="Brettin T."/>
            <person name="Bruce D."/>
            <person name="Detter J.C."/>
            <person name="Han C."/>
            <person name="Schmutz J."/>
            <person name="Larimer F."/>
            <person name="Land M."/>
            <person name="Hauser L."/>
            <person name="Kyrpides N."/>
            <person name="Kim E."/>
            <person name="Zhao J.-S."/>
            <person name="Richardson P."/>
        </authorList>
    </citation>
    <scope>NUCLEOTIDE SEQUENCE [LARGE SCALE GENOMIC DNA]</scope>
    <source>
        <strain>HAW-EB3</strain>
    </source>
</reference>
<sequence>MKFVDEAVIRVEAGDGGSGCVSFRREKYVPDGGPDGGDGGDGGSVYLQADESFNTLIDFQFERFHRAERGKNGRGRDCTGHGGEDLVLKVPVGTRAIDEETEESLGDLTAHGQRMLVAKGGFHGLGNTRFKSSTNRAPRQKTLGTPGEVRSLKLELMLLADVGLLGMPNAGKSTFIRSVSRAKPKVADYPFTTLVPNLGVVNPRHGQSFVIADIPGLIEGAADGAGLGVRFLKHLERCRVLLHLVDIDPIDGSDPIESARAIVGELEKHSPKLASKPRWLVINKKDLLLEEELQERIDHIVKELEWKGEVFTISAYNREGTEELSLKLVDFIDSLPEEEEVDVEAEVEFKWDNYHKDSDSLNEDFDDSDDDDFDDDDYDVEVIYQR</sequence>
<evidence type="ECO:0000255" key="1">
    <source>
        <dbReference type="HAMAP-Rule" id="MF_01454"/>
    </source>
</evidence>
<evidence type="ECO:0000255" key="2">
    <source>
        <dbReference type="PROSITE-ProRule" id="PRU01231"/>
    </source>
</evidence>
<evidence type="ECO:0000256" key="3">
    <source>
        <dbReference type="SAM" id="MobiDB-lite"/>
    </source>
</evidence>
<proteinExistence type="inferred from homology"/>
<name>OBG_SHESH</name>
<dbReference type="EC" id="3.6.5.-" evidence="1"/>
<dbReference type="EMBL" id="CP000821">
    <property type="protein sequence ID" value="ABV35567.1"/>
    <property type="molecule type" value="Genomic_DNA"/>
</dbReference>
<dbReference type="RefSeq" id="WP_012141303.1">
    <property type="nucleotide sequence ID" value="NC_009831.1"/>
</dbReference>
<dbReference type="SMR" id="A8FRU4"/>
<dbReference type="STRING" id="425104.Ssed_0956"/>
<dbReference type="KEGG" id="sse:Ssed_0956"/>
<dbReference type="eggNOG" id="COG0536">
    <property type="taxonomic scope" value="Bacteria"/>
</dbReference>
<dbReference type="HOGENOM" id="CLU_011747_2_0_6"/>
<dbReference type="OrthoDB" id="9807318at2"/>
<dbReference type="Proteomes" id="UP000002015">
    <property type="component" value="Chromosome"/>
</dbReference>
<dbReference type="GO" id="GO:0005737">
    <property type="term" value="C:cytoplasm"/>
    <property type="evidence" value="ECO:0007669"/>
    <property type="project" value="UniProtKB-SubCell"/>
</dbReference>
<dbReference type="GO" id="GO:0005525">
    <property type="term" value="F:GTP binding"/>
    <property type="evidence" value="ECO:0007669"/>
    <property type="project" value="UniProtKB-UniRule"/>
</dbReference>
<dbReference type="GO" id="GO:0003924">
    <property type="term" value="F:GTPase activity"/>
    <property type="evidence" value="ECO:0007669"/>
    <property type="project" value="UniProtKB-UniRule"/>
</dbReference>
<dbReference type="GO" id="GO:0000287">
    <property type="term" value="F:magnesium ion binding"/>
    <property type="evidence" value="ECO:0007669"/>
    <property type="project" value="InterPro"/>
</dbReference>
<dbReference type="GO" id="GO:0042254">
    <property type="term" value="P:ribosome biogenesis"/>
    <property type="evidence" value="ECO:0007669"/>
    <property type="project" value="UniProtKB-UniRule"/>
</dbReference>
<dbReference type="CDD" id="cd01898">
    <property type="entry name" value="Obg"/>
    <property type="match status" value="1"/>
</dbReference>
<dbReference type="FunFam" id="2.70.210.12:FF:000001">
    <property type="entry name" value="GTPase Obg"/>
    <property type="match status" value="1"/>
</dbReference>
<dbReference type="Gene3D" id="2.70.210.12">
    <property type="entry name" value="GTP1/OBG domain"/>
    <property type="match status" value="1"/>
</dbReference>
<dbReference type="Gene3D" id="3.40.50.300">
    <property type="entry name" value="P-loop containing nucleotide triphosphate hydrolases"/>
    <property type="match status" value="1"/>
</dbReference>
<dbReference type="HAMAP" id="MF_01454">
    <property type="entry name" value="GTPase_Obg"/>
    <property type="match status" value="1"/>
</dbReference>
<dbReference type="InterPro" id="IPR031167">
    <property type="entry name" value="G_OBG"/>
</dbReference>
<dbReference type="InterPro" id="IPR006073">
    <property type="entry name" value="GTP-bd"/>
</dbReference>
<dbReference type="InterPro" id="IPR014100">
    <property type="entry name" value="GTP-bd_Obg/CgtA"/>
</dbReference>
<dbReference type="InterPro" id="IPR006074">
    <property type="entry name" value="GTP1-OBG_CS"/>
</dbReference>
<dbReference type="InterPro" id="IPR006169">
    <property type="entry name" value="GTP1_OBG_dom"/>
</dbReference>
<dbReference type="InterPro" id="IPR036726">
    <property type="entry name" value="GTP1_OBG_dom_sf"/>
</dbReference>
<dbReference type="InterPro" id="IPR045086">
    <property type="entry name" value="OBG_GTPase"/>
</dbReference>
<dbReference type="InterPro" id="IPR027417">
    <property type="entry name" value="P-loop_NTPase"/>
</dbReference>
<dbReference type="NCBIfam" id="TIGR02729">
    <property type="entry name" value="Obg_CgtA"/>
    <property type="match status" value="1"/>
</dbReference>
<dbReference type="NCBIfam" id="NF008955">
    <property type="entry name" value="PRK12297.1"/>
    <property type="match status" value="1"/>
</dbReference>
<dbReference type="NCBIfam" id="NF008956">
    <property type="entry name" value="PRK12299.1"/>
    <property type="match status" value="1"/>
</dbReference>
<dbReference type="PANTHER" id="PTHR11702">
    <property type="entry name" value="DEVELOPMENTALLY REGULATED GTP-BINDING PROTEIN-RELATED"/>
    <property type="match status" value="1"/>
</dbReference>
<dbReference type="PANTHER" id="PTHR11702:SF31">
    <property type="entry name" value="MITOCHONDRIAL RIBOSOME-ASSOCIATED GTPASE 2"/>
    <property type="match status" value="1"/>
</dbReference>
<dbReference type="Pfam" id="PF01018">
    <property type="entry name" value="GTP1_OBG"/>
    <property type="match status" value="1"/>
</dbReference>
<dbReference type="Pfam" id="PF01926">
    <property type="entry name" value="MMR_HSR1"/>
    <property type="match status" value="1"/>
</dbReference>
<dbReference type="PIRSF" id="PIRSF002401">
    <property type="entry name" value="GTP_bd_Obg/CgtA"/>
    <property type="match status" value="1"/>
</dbReference>
<dbReference type="PRINTS" id="PR00326">
    <property type="entry name" value="GTP1OBG"/>
</dbReference>
<dbReference type="SUPFAM" id="SSF82051">
    <property type="entry name" value="Obg GTP-binding protein N-terminal domain"/>
    <property type="match status" value="1"/>
</dbReference>
<dbReference type="SUPFAM" id="SSF52540">
    <property type="entry name" value="P-loop containing nucleoside triphosphate hydrolases"/>
    <property type="match status" value="1"/>
</dbReference>
<dbReference type="PROSITE" id="PS51710">
    <property type="entry name" value="G_OBG"/>
    <property type="match status" value="1"/>
</dbReference>
<dbReference type="PROSITE" id="PS00905">
    <property type="entry name" value="GTP1_OBG"/>
    <property type="match status" value="1"/>
</dbReference>
<dbReference type="PROSITE" id="PS51883">
    <property type="entry name" value="OBG"/>
    <property type="match status" value="1"/>
</dbReference>
<accession>A8FRU4</accession>
<organism>
    <name type="scientific">Shewanella sediminis (strain HAW-EB3)</name>
    <dbReference type="NCBI Taxonomy" id="425104"/>
    <lineage>
        <taxon>Bacteria</taxon>
        <taxon>Pseudomonadati</taxon>
        <taxon>Pseudomonadota</taxon>
        <taxon>Gammaproteobacteria</taxon>
        <taxon>Alteromonadales</taxon>
        <taxon>Shewanellaceae</taxon>
        <taxon>Shewanella</taxon>
    </lineage>
</organism>
<feature type="chain" id="PRO_0000386248" description="GTPase Obg">
    <location>
        <begin position="1"/>
        <end position="386"/>
    </location>
</feature>
<feature type="domain" description="Obg" evidence="2">
    <location>
        <begin position="1"/>
        <end position="159"/>
    </location>
</feature>
<feature type="domain" description="OBG-type G" evidence="1">
    <location>
        <begin position="160"/>
        <end position="333"/>
    </location>
</feature>
<feature type="region of interest" description="Disordered" evidence="3">
    <location>
        <begin position="356"/>
        <end position="375"/>
    </location>
</feature>
<feature type="compositionally biased region" description="Acidic residues" evidence="3">
    <location>
        <begin position="360"/>
        <end position="375"/>
    </location>
</feature>
<feature type="binding site" evidence="1">
    <location>
        <begin position="166"/>
        <end position="173"/>
    </location>
    <ligand>
        <name>GTP</name>
        <dbReference type="ChEBI" id="CHEBI:37565"/>
    </ligand>
</feature>
<feature type="binding site" evidence="1">
    <location>
        <position position="173"/>
    </location>
    <ligand>
        <name>Mg(2+)</name>
        <dbReference type="ChEBI" id="CHEBI:18420"/>
    </ligand>
</feature>
<feature type="binding site" evidence="1">
    <location>
        <begin position="191"/>
        <end position="195"/>
    </location>
    <ligand>
        <name>GTP</name>
        <dbReference type="ChEBI" id="CHEBI:37565"/>
    </ligand>
</feature>
<feature type="binding site" evidence="1">
    <location>
        <position position="193"/>
    </location>
    <ligand>
        <name>Mg(2+)</name>
        <dbReference type="ChEBI" id="CHEBI:18420"/>
    </ligand>
</feature>
<feature type="binding site" evidence="1">
    <location>
        <begin position="213"/>
        <end position="216"/>
    </location>
    <ligand>
        <name>GTP</name>
        <dbReference type="ChEBI" id="CHEBI:37565"/>
    </ligand>
</feature>
<feature type="binding site" evidence="1">
    <location>
        <begin position="283"/>
        <end position="286"/>
    </location>
    <ligand>
        <name>GTP</name>
        <dbReference type="ChEBI" id="CHEBI:37565"/>
    </ligand>
</feature>
<feature type="binding site" evidence="1">
    <location>
        <begin position="314"/>
        <end position="316"/>
    </location>
    <ligand>
        <name>GTP</name>
        <dbReference type="ChEBI" id="CHEBI:37565"/>
    </ligand>
</feature>
<keyword id="KW-0963">Cytoplasm</keyword>
<keyword id="KW-0342">GTP-binding</keyword>
<keyword id="KW-0378">Hydrolase</keyword>
<keyword id="KW-0460">Magnesium</keyword>
<keyword id="KW-0479">Metal-binding</keyword>
<keyword id="KW-0547">Nucleotide-binding</keyword>
<keyword id="KW-1185">Reference proteome</keyword>
<comment type="function">
    <text evidence="1">An essential GTPase which binds GTP, GDP and possibly (p)ppGpp with moderate affinity, with high nucleotide exchange rates and a fairly low GTP hydrolysis rate. Plays a role in control of the cell cycle, stress response, ribosome biogenesis and in those bacteria that undergo differentiation, in morphogenesis control.</text>
</comment>
<comment type="cofactor">
    <cofactor evidence="1">
        <name>Mg(2+)</name>
        <dbReference type="ChEBI" id="CHEBI:18420"/>
    </cofactor>
</comment>
<comment type="subunit">
    <text evidence="1">Monomer.</text>
</comment>
<comment type="subcellular location">
    <subcellularLocation>
        <location evidence="1">Cytoplasm</location>
    </subcellularLocation>
</comment>
<comment type="similarity">
    <text evidence="1">Belongs to the TRAFAC class OBG-HflX-like GTPase superfamily. OBG GTPase family.</text>
</comment>
<protein>
    <recommendedName>
        <fullName evidence="1">GTPase Obg</fullName>
        <ecNumber evidence="1">3.6.5.-</ecNumber>
    </recommendedName>
    <alternativeName>
        <fullName evidence="1">GTP-binding protein Obg</fullName>
    </alternativeName>
</protein>